<organism>
    <name type="scientific">Aotus nancymaae</name>
    <name type="common">Ma's night monkey</name>
    <dbReference type="NCBI Taxonomy" id="37293"/>
    <lineage>
        <taxon>Eukaryota</taxon>
        <taxon>Metazoa</taxon>
        <taxon>Chordata</taxon>
        <taxon>Craniata</taxon>
        <taxon>Vertebrata</taxon>
        <taxon>Euteleostomi</taxon>
        <taxon>Mammalia</taxon>
        <taxon>Eutheria</taxon>
        <taxon>Euarchontoglires</taxon>
        <taxon>Primates</taxon>
        <taxon>Haplorrhini</taxon>
        <taxon>Platyrrhini</taxon>
        <taxon>Aotidae</taxon>
        <taxon>Aotus</taxon>
    </lineage>
</organism>
<comment type="function">
    <text evidence="1">Receptor tyrosine kinase that transduces signals from the extracellular matrix into the cytoplasm by binding to hepatocyte growth factor/HGF ligand. Regulates many physiological processes including proliferation, scattering, morphogenesis and survival. Ligand binding at the cell surface induces autophosphorylation of MET on its intracellular domain that provides docking sites for downstream signaling molecules. Following activation by ligand, interacts with the PI3-kinase subunit PIK3R1, PLCG1, SRC, GRB2, STAT3 or the adapter GAB1. Recruitment of these downstream effectors by MET leads to the activation of several signaling cascades including the RAS-ERK, PI3 kinase-AKT, or PLCgamma-PKC. The RAS-ERK activation is associated with the morphogenetic effects while PI3K/AKT coordinates prosurvival effects. During embryonic development, MET signaling plays a role in gastrulation, development and migration of muscles and neuronal precursors, angiogenesis and kidney formation. In adults, participates in wound healing as well as organ regeneration and tissue remodeling. Also promotes differentiation and proliferation of hematopoietic cells (By similarity).</text>
</comment>
<comment type="catalytic activity">
    <reaction evidence="7">
        <text>L-tyrosyl-[protein] + ATP = O-phospho-L-tyrosyl-[protein] + ADP + H(+)</text>
        <dbReference type="Rhea" id="RHEA:10596"/>
        <dbReference type="Rhea" id="RHEA-COMP:10136"/>
        <dbReference type="Rhea" id="RHEA-COMP:20101"/>
        <dbReference type="ChEBI" id="CHEBI:15378"/>
        <dbReference type="ChEBI" id="CHEBI:30616"/>
        <dbReference type="ChEBI" id="CHEBI:46858"/>
        <dbReference type="ChEBI" id="CHEBI:61978"/>
        <dbReference type="ChEBI" id="CHEBI:456216"/>
        <dbReference type="EC" id="2.7.10.1"/>
    </reaction>
</comment>
<comment type="activity regulation">
    <text evidence="1">In its inactive state, the C-terminal tail interacts with the catalytic domain and inhibits the kinase activity. Upon ligand binding, the C-terminal tail is displaced and becomes phosphorylated, thus increasing the kinase activity (By similarity).</text>
</comment>
<comment type="subunit">
    <text evidence="2 3">Heterodimer made of an alpha chain (50 kDa) and a beta chain (145 kDa) which are disulfide linked. Binds PLXNB1. Interacts when phosphorylated with downstream effectors including STAT3, PIK3R1, SRC, PCLG1, GRB2 and GAB1. Interacts with SPSB1, SPSB2 and SPSB4. Interacts with INPP5D/SHIP1. When phosphorylated at Tyr-1356, interacts with INPPL1/SHIP2. Interacts with RANBP9 and RANBP10, as well as SPSB1, SPSB2, SPSB3 and SPSB4. SPSB1 binding occurs in the presence and in the absence of HGF, however HGF treatment has a positive effect on this interaction. Interacts with MUC20; prevents interaction with GRB2 and suppresses hepatocyte growth factor-induced cell proliferation. Interacts with GRB10 (By similarity). Interacts with PTPN1 and PTPN2 (By similarity). Interacts with tensin TNS3 (By similarity). Interacts (when phosphorylated) with tensin TNS4 (via SH2 domain); the interaction increases MET protein stability by inhibiting MET endocytosis and subsequent lysosomal degradation (By similarity).</text>
</comment>
<comment type="subcellular location">
    <subcellularLocation>
        <location evidence="1">Membrane</location>
        <topology evidence="1">Single-pass type I membrane protein</topology>
    </subcellularLocation>
</comment>
<comment type="domain">
    <text evidence="1">The kinase domain is involved in SPSB1 binding.</text>
</comment>
<comment type="domain">
    <text evidence="1">The beta-propeller Sema domain mediates binding to HGF.</text>
</comment>
<comment type="PTM">
    <text evidence="2">Autophosphorylated in response to ligand binding on Tyr-1234 and Tyr-1235 in the kinase domain leading to further phosphorylation of Tyr-1349 and Tyr-1356 in the C-terminal multifunctional docking site. Dephosphorylated by PTPRJ at Tyr-1349 and Tyr-1365. Dephosphorylated by PTPN1 and PTPN2 (By similarity).</text>
</comment>
<comment type="PTM">
    <text evidence="2">Ubiquitinated. Ubiquitination by CBL regulates the receptor stability and activity through proteasomal degradation (By similarity).</text>
</comment>
<comment type="PTM">
    <text evidence="2">O-mannosylation of IPT/TIG domains by TMEM260 is required for protein maturation. O-mannosylated residues are composed of single mannose glycans that are not elongated or modified.</text>
</comment>
<comment type="similarity">
    <text evidence="5">Belongs to the protein kinase superfamily. Tyr protein kinase family.</text>
</comment>
<gene>
    <name type="primary">MET</name>
</gene>
<evidence type="ECO:0000250" key="1"/>
<evidence type="ECO:0000250" key="2">
    <source>
        <dbReference type="UniProtKB" id="P08581"/>
    </source>
</evidence>
<evidence type="ECO:0000250" key="3">
    <source>
        <dbReference type="UniProtKB" id="P16056"/>
    </source>
</evidence>
<evidence type="ECO:0000255" key="4"/>
<evidence type="ECO:0000255" key="5">
    <source>
        <dbReference type="PROSITE-ProRule" id="PRU00159"/>
    </source>
</evidence>
<evidence type="ECO:0000255" key="6">
    <source>
        <dbReference type="PROSITE-ProRule" id="PRU00352"/>
    </source>
</evidence>
<evidence type="ECO:0000255" key="7">
    <source>
        <dbReference type="PROSITE-ProRule" id="PRU10028"/>
    </source>
</evidence>
<proteinExistence type="inferred from homology"/>
<protein>
    <recommendedName>
        <fullName>Hepatocyte growth factor receptor</fullName>
        <shortName>HGF receptor</shortName>
        <ecNumber>2.7.10.1</ecNumber>
    </recommendedName>
    <alternativeName>
        <fullName>HGF/SF receptor</fullName>
    </alternativeName>
    <alternativeName>
        <fullName>Proto-oncogene c-Met</fullName>
    </alternativeName>
    <alternativeName>
        <fullName>Scatter factor receptor</fullName>
        <shortName>SF receptor</shortName>
    </alternativeName>
    <alternativeName>
        <fullName>Tyrosine-protein kinase Met</fullName>
    </alternativeName>
</protein>
<keyword id="KW-0067">ATP-binding</keyword>
<keyword id="KW-1015">Disulfide bond</keyword>
<keyword id="KW-0325">Glycoprotein</keyword>
<keyword id="KW-0418">Kinase</keyword>
<keyword id="KW-0472">Membrane</keyword>
<keyword id="KW-0547">Nucleotide-binding</keyword>
<keyword id="KW-0597">Phosphoprotein</keyword>
<keyword id="KW-0656">Proto-oncogene</keyword>
<keyword id="KW-0675">Receptor</keyword>
<keyword id="KW-1185">Reference proteome</keyword>
<keyword id="KW-0677">Repeat</keyword>
<keyword id="KW-0732">Signal</keyword>
<keyword id="KW-0808">Transferase</keyword>
<keyword id="KW-0812">Transmembrane</keyword>
<keyword id="KW-1133">Transmembrane helix</keyword>
<keyword id="KW-0829">Tyrosine-protein kinase</keyword>
<keyword id="KW-0832">Ubl conjugation</keyword>
<reference key="1">
    <citation type="submission" date="2006-09" db="EMBL/GenBank/DDBJ databases">
        <title>NISC comparative sequencing initiative.</title>
        <authorList>
            <person name="Antonellis A."/>
            <person name="Ayele K."/>
            <person name="Benjamin B."/>
            <person name="Blakesley R.W."/>
            <person name="Boakye A."/>
            <person name="Bouffard G.G."/>
            <person name="Brinkley C."/>
            <person name="Brooks S."/>
            <person name="Chu G."/>
            <person name="Coleman H."/>
            <person name="Engle J."/>
            <person name="Gestole M."/>
            <person name="Greene A."/>
            <person name="Guan X."/>
            <person name="Gupta J."/>
            <person name="Haghighi P."/>
            <person name="Han J."/>
            <person name="Hansen N."/>
            <person name="Ho S.-L."/>
            <person name="Hu P."/>
            <person name="Hunter G."/>
            <person name="Hurle B."/>
            <person name="Idol J.R."/>
            <person name="Kwong P."/>
            <person name="Laric P."/>
            <person name="Larson S."/>
            <person name="Lee-Lin S.-Q."/>
            <person name="Legaspi R."/>
            <person name="Madden M."/>
            <person name="Maduro Q.L."/>
            <person name="Maduro V.B."/>
            <person name="Margulies E.H."/>
            <person name="Masiello C."/>
            <person name="Maskeri B."/>
            <person name="McDowell J."/>
            <person name="Mojidi H.A."/>
            <person name="Mullikin J.C."/>
            <person name="Oestreicher J.S."/>
            <person name="Park M."/>
            <person name="Portnoy M.E."/>
            <person name="Prasad A."/>
            <person name="Puri O."/>
            <person name="Reddix-Dugue N."/>
            <person name="Schandler K."/>
            <person name="Schueler M.G."/>
            <person name="Sison C."/>
            <person name="Stantripop S."/>
            <person name="Stephen E."/>
            <person name="Taye A."/>
            <person name="Thomas J.W."/>
            <person name="Thomas P.J."/>
            <person name="Tsipouri V."/>
            <person name="Ung L."/>
            <person name="Vogt J.L."/>
            <person name="Wetherby K.D."/>
            <person name="Young A."/>
            <person name="Green E.D."/>
        </authorList>
    </citation>
    <scope>NUCLEOTIDE SEQUENCE [LARGE SCALE GENOMIC DNA]</scope>
</reference>
<feature type="signal peptide" evidence="4">
    <location>
        <begin position="1"/>
        <end position="24"/>
    </location>
</feature>
<feature type="chain" id="PRO_0000260417" description="Hepatocyte growth factor receptor">
    <location>
        <begin position="25"/>
        <end position="1381"/>
    </location>
</feature>
<feature type="topological domain" description="Extracellular" evidence="4">
    <location>
        <begin position="25"/>
        <end position="932"/>
    </location>
</feature>
<feature type="transmembrane region" description="Helical" evidence="4">
    <location>
        <begin position="933"/>
        <end position="955"/>
    </location>
</feature>
<feature type="topological domain" description="Cytoplasmic" evidence="4">
    <location>
        <begin position="956"/>
        <end position="1381"/>
    </location>
</feature>
<feature type="domain" description="Sema" evidence="6">
    <location>
        <begin position="27"/>
        <end position="515"/>
    </location>
</feature>
<feature type="domain" description="IPT/TIG 1">
    <location>
        <begin position="563"/>
        <end position="655"/>
    </location>
</feature>
<feature type="domain" description="IPT/TIG 2">
    <location>
        <begin position="657"/>
        <end position="739"/>
    </location>
</feature>
<feature type="domain" description="IPT/TIG 3">
    <location>
        <begin position="742"/>
        <end position="836"/>
    </location>
</feature>
<feature type="domain" description="Protein kinase" evidence="5">
    <location>
        <begin position="1078"/>
        <end position="1345"/>
    </location>
</feature>
<feature type="region of interest" description="Interaction with RANBP9" evidence="1">
    <location>
        <begin position="1212"/>
        <end position="1381"/>
    </location>
</feature>
<feature type="region of interest" description="Interaction with MUC20" evidence="1">
    <location>
        <begin position="1320"/>
        <end position="1359"/>
    </location>
</feature>
<feature type="active site" description="Proton acceptor" evidence="5 7">
    <location>
        <position position="1204"/>
    </location>
</feature>
<feature type="binding site" evidence="5">
    <location>
        <begin position="1084"/>
        <end position="1092"/>
    </location>
    <ligand>
        <name>ATP</name>
        <dbReference type="ChEBI" id="CHEBI:30616"/>
    </ligand>
</feature>
<feature type="binding site" evidence="5">
    <location>
        <position position="1110"/>
    </location>
    <ligand>
        <name>ATP</name>
        <dbReference type="ChEBI" id="CHEBI:30616"/>
    </ligand>
</feature>
<feature type="site" description="Cleavage" evidence="4">
    <location>
        <begin position="307"/>
        <end position="308"/>
    </location>
</feature>
<feature type="modified residue" description="Phosphoserine" evidence="2">
    <location>
        <position position="966"/>
    </location>
</feature>
<feature type="modified residue" description="Phosphothreonine" evidence="2">
    <location>
        <position position="977"/>
    </location>
</feature>
<feature type="modified residue" description="Phosphoserine" evidence="2">
    <location>
        <position position="990"/>
    </location>
</feature>
<feature type="modified residue" description="Phosphoserine" evidence="2">
    <location>
        <position position="997"/>
    </location>
</feature>
<feature type="modified residue" description="Phosphoserine" evidence="2">
    <location>
        <position position="1000"/>
    </location>
</feature>
<feature type="modified residue" description="Phosphotyrosine" evidence="2">
    <location>
        <position position="1003"/>
    </location>
</feature>
<feature type="modified residue" description="Phosphotyrosine" evidence="2">
    <location>
        <position position="1230"/>
    </location>
</feature>
<feature type="modified residue" description="Phosphotyrosine; by autocatalysis" evidence="2">
    <location>
        <position position="1234"/>
    </location>
</feature>
<feature type="modified residue" description="Phosphotyrosine; by autocatalysis" evidence="2">
    <location>
        <position position="1235"/>
    </location>
</feature>
<feature type="modified residue" description="Phosphothreonine" evidence="2">
    <location>
        <position position="1289"/>
    </location>
</feature>
<feature type="modified residue" description="Phosphotyrosine; by autocatalysis" evidence="2">
    <location>
        <position position="1349"/>
    </location>
</feature>
<feature type="modified residue" description="Phosphotyrosine; by autocatalysis" evidence="2">
    <location>
        <position position="1356"/>
    </location>
</feature>
<feature type="modified residue" description="Phosphotyrosine" evidence="2">
    <location>
        <position position="1365"/>
    </location>
</feature>
<feature type="glycosylation site" description="N-linked (GlcNAc...) asparagine" evidence="4">
    <location>
        <position position="45"/>
    </location>
</feature>
<feature type="glycosylation site" description="N-linked (GlcNAc...) asparagine" evidence="4">
    <location>
        <position position="106"/>
    </location>
</feature>
<feature type="glycosylation site" description="N-linked (GlcNAc...) asparagine" evidence="4">
    <location>
        <position position="149"/>
    </location>
</feature>
<feature type="glycosylation site" description="N-linked (GlcNAc...) asparagine" evidence="4">
    <location>
        <position position="202"/>
    </location>
</feature>
<feature type="glycosylation site" description="N-linked (GlcNAc...) asparagine" evidence="4">
    <location>
        <position position="399"/>
    </location>
</feature>
<feature type="glycosylation site" description="O-linked (Man) threonine" evidence="2">
    <location>
        <position position="582"/>
    </location>
</feature>
<feature type="glycosylation site" description="N-linked (GlcNAc...) asparagine" evidence="4">
    <location>
        <position position="607"/>
    </location>
</feature>
<feature type="glycosylation site" description="N-linked (GlcNAc...) asparagine" evidence="4">
    <location>
        <position position="635"/>
    </location>
</feature>
<feature type="glycosylation site" description="O-linked (Man) threonine" evidence="2">
    <location>
        <position position="676"/>
    </location>
</feature>
<feature type="glycosylation site" description="O-linked (Man) threonine" evidence="2">
    <location>
        <position position="761"/>
    </location>
</feature>
<feature type="glycosylation site" description="N-linked (GlcNAc...) asparagine" evidence="4">
    <location>
        <position position="785"/>
    </location>
</feature>
<feature type="glycosylation site" description="N-linked (GlcNAc...) asparagine" evidence="4">
    <location>
        <position position="879"/>
    </location>
</feature>
<feature type="glycosylation site" description="N-linked (GlcNAc...) asparagine" evidence="4">
    <location>
        <position position="930"/>
    </location>
</feature>
<feature type="disulfide bond" evidence="6">
    <location>
        <begin position="95"/>
        <end position="101"/>
    </location>
</feature>
<feature type="disulfide bond" evidence="6">
    <location>
        <begin position="98"/>
        <end position="160"/>
    </location>
</feature>
<feature type="disulfide bond" evidence="6">
    <location>
        <begin position="133"/>
        <end position="141"/>
    </location>
</feature>
<feature type="disulfide bond" evidence="6">
    <location>
        <begin position="172"/>
        <end position="175"/>
    </location>
</feature>
<feature type="disulfide bond" evidence="6">
    <location>
        <begin position="298"/>
        <end position="363"/>
    </location>
</feature>
<feature type="disulfide bond" evidence="6">
    <location>
        <begin position="385"/>
        <end position="397"/>
    </location>
</feature>
<feature type="disulfide bond" evidence="6">
    <location>
        <begin position="520"/>
        <end position="538"/>
    </location>
</feature>
<feature type="disulfide bond" evidence="6">
    <location>
        <begin position="526"/>
        <end position="561"/>
    </location>
</feature>
<feature type="disulfide bond" evidence="6">
    <location>
        <begin position="529"/>
        <end position="545"/>
    </location>
</feature>
<feature type="disulfide bond" evidence="6">
    <location>
        <begin position="541"/>
        <end position="551"/>
    </location>
</feature>
<sequence>MKAPAVLAPGILLLLFTLVQRSNGECKEALTKSEMNVNMKYQLPNFTAETPIQNVILHEHHIFLGATNYIYVLNEEDLQKVAEHRTGPVLEHPDCFPCQDCSSKANLSGGVWKDNINMALVVDTYYDDQLISCGSVNRGTCQRHVFPHNHTADIQSEVHCIFSPQTEEPSQCPDCVVSALGTKVLLSVKHRFLNFFVGNTINSSYFPDHSLHSISVRRLKETKDGFMFLTDQSYVDVLPEFRDSYPIKYVHAFESNNFIYFLTVQRETLNAQTFHTRIIRFCSINSALHSYMEMPLECILTEKRKKRSTKKEVFNILQAAYVSKPGAQLARQIGASLNDDILFGVFAQSKPDSAEPMDRSAVCAFPIKYVNDFFNKIVNKNNVRCLQHFYGPNHEHCFNRTFQRNLLGCEARRDEYRTEFTTALQRIDLFAGQFNKVLLTSISTFVKGDLTIANLGTSEGRFIQIVVSRSVPSTPHVNFLLDFHPVSPEVIVEHPLNQNGYTLVVTGKKITKIPLNGLGCRHFQSCSQCLSAPSFVQCGWCHDKCVQSEECSSGTWTQETCLPTIYKVFPTSAPLEGGTRLTICGWDFGFRRNNKFDLKKTRVLLGNESCTLTLSESTMNTLKCTVGPAMNEHFNMSIIISNSHGTTQYSTFSYVDPIITSISPRYGPMSGGTLLTLTGNYLNSGNSRHISIGGKTCTLKSVSNSILECYTPAQTISTEFPVKLKIDLANRETSIFSYREDPIVYEIHPTKSFISGGSTITGIGKNLNSVSVPRMVINLHEARRNFTVACQHRSNSEIICCTTPSLQQLNLQLPLKTKAFFMLDGILSKYFDLIYVHNPVFKPFEKPVMISMGNENVLEIKGNDIDPEAVKGEVLKVGNKSCENIHLHSQAVLCTVPSDLLKLNSELNIEWKQAISSTVLGKVIVQPDQNFTGLIAGVVSISIALLLLLGLFLWLKKRKQIKDLGSELVRYDARVHTPHLDRLVSARSVSPTTEMVSNESVDYRATFPEDQFPNSSQNGSCRQVQYPLTDMSPILTSGDSDISSPLLQNTVHIDLSALNPELVQAVQHVVIGPSSLIVHFNEVIGRGHFGCVYHGTLLDNDGKKIHCAVKSLNRITDIGEVSQFLTEGIIMKDFSHPNVLSLLGICLRSEGSPLVVLPYMKHGDLRNFIRNETHNPTVKDLIGFGLQVAKGMKYLASKKFVHRDLAARNCMLDEKFTVKVADFGLARDMYDKEYYSVHNKTGAKLPVKWMALESLQTQKFTTKSDVWSFGVLLWELMTRGAPPYPDVNTFDITVYLLQGRRLLQPEYCPDPLYEVMLKCWHPKAEMRPSFSELVSRISAIFSTFIGEHYVHVNATYVNVKCVAPYPSLLSSQDNPDGEVDT</sequence>
<name>MET_AOTNA</name>
<dbReference type="EC" id="2.7.10.1"/>
<dbReference type="EMBL" id="DP000197">
    <property type="protein sequence ID" value="ABJ08884.1"/>
    <property type="molecule type" value="Genomic_DNA"/>
</dbReference>
<dbReference type="SMR" id="Q07DV8"/>
<dbReference type="STRING" id="37293.ENSANAP00000009807"/>
<dbReference type="GlyCosmos" id="Q07DV8">
    <property type="glycosylation" value="10 sites, No reported glycans"/>
</dbReference>
<dbReference type="Proteomes" id="UP000233020">
    <property type="component" value="Whole Genome Shotgun Assembly"/>
</dbReference>
<dbReference type="GO" id="GO:0005886">
    <property type="term" value="C:plasma membrane"/>
    <property type="evidence" value="ECO:0007669"/>
    <property type="project" value="TreeGrafter"/>
</dbReference>
<dbReference type="GO" id="GO:0002116">
    <property type="term" value="C:semaphorin receptor complex"/>
    <property type="evidence" value="ECO:0007669"/>
    <property type="project" value="TreeGrafter"/>
</dbReference>
<dbReference type="GO" id="GO:0005524">
    <property type="term" value="F:ATP binding"/>
    <property type="evidence" value="ECO:0007669"/>
    <property type="project" value="UniProtKB-KW"/>
</dbReference>
<dbReference type="GO" id="GO:0017154">
    <property type="term" value="F:semaphorin receptor activity"/>
    <property type="evidence" value="ECO:0007669"/>
    <property type="project" value="InterPro"/>
</dbReference>
<dbReference type="GO" id="GO:0004714">
    <property type="term" value="F:transmembrane receptor protein tyrosine kinase activity"/>
    <property type="evidence" value="ECO:0007669"/>
    <property type="project" value="UniProtKB-EC"/>
</dbReference>
<dbReference type="GO" id="GO:0007169">
    <property type="term" value="P:cell surface receptor protein tyrosine kinase signaling pathway"/>
    <property type="evidence" value="ECO:0007669"/>
    <property type="project" value="InterPro"/>
</dbReference>
<dbReference type="GO" id="GO:0050918">
    <property type="term" value="P:positive chemotaxis"/>
    <property type="evidence" value="ECO:0000250"/>
    <property type="project" value="UniProtKB"/>
</dbReference>
<dbReference type="GO" id="GO:2001028">
    <property type="term" value="P:positive regulation of endothelial cell chemotaxis"/>
    <property type="evidence" value="ECO:0000250"/>
    <property type="project" value="UniProtKB"/>
</dbReference>
<dbReference type="GO" id="GO:0071526">
    <property type="term" value="P:semaphorin-plexin signaling pathway"/>
    <property type="evidence" value="ECO:0000250"/>
    <property type="project" value="UniProtKB"/>
</dbReference>
<dbReference type="CDD" id="cd00603">
    <property type="entry name" value="IPT_PCSR"/>
    <property type="match status" value="1"/>
</dbReference>
<dbReference type="CDD" id="cd01180">
    <property type="entry name" value="IPT_plexin_repeat1"/>
    <property type="match status" value="1"/>
</dbReference>
<dbReference type="CDD" id="cd01179">
    <property type="entry name" value="IPT_plexin_repeat2"/>
    <property type="match status" value="1"/>
</dbReference>
<dbReference type="CDD" id="cd05058">
    <property type="entry name" value="PTKc_Met_Ron"/>
    <property type="match status" value="1"/>
</dbReference>
<dbReference type="FunFam" id="1.10.510.10:FF:000093">
    <property type="entry name" value="Hepatocyte growth factor receptor"/>
    <property type="match status" value="1"/>
</dbReference>
<dbReference type="FunFam" id="2.130.10.10:FF:000088">
    <property type="entry name" value="Hepatocyte growth factor receptor"/>
    <property type="match status" value="1"/>
</dbReference>
<dbReference type="FunFam" id="2.60.40.10:FF:000213">
    <property type="entry name" value="Hepatocyte growth factor receptor"/>
    <property type="match status" value="1"/>
</dbReference>
<dbReference type="FunFam" id="2.60.40.10:FF:000400">
    <property type="entry name" value="Hepatocyte growth factor receptor"/>
    <property type="match status" value="1"/>
</dbReference>
<dbReference type="FunFam" id="2.60.40.10:FF:002708">
    <property type="entry name" value="Hepatocyte growth factor receptor"/>
    <property type="match status" value="1"/>
</dbReference>
<dbReference type="FunFam" id="3.30.200.20:FF:000188">
    <property type="entry name" value="Hepatocyte growth factor receptor"/>
    <property type="match status" value="1"/>
</dbReference>
<dbReference type="FunFam" id="3.30.1680.10:FF:000006">
    <property type="entry name" value="Macrophage-stimulating 1 receptor b"/>
    <property type="match status" value="1"/>
</dbReference>
<dbReference type="Gene3D" id="2.60.40.10">
    <property type="entry name" value="Immunoglobulins"/>
    <property type="match status" value="3"/>
</dbReference>
<dbReference type="Gene3D" id="3.30.200.20">
    <property type="entry name" value="Phosphorylase Kinase, domain 1"/>
    <property type="match status" value="1"/>
</dbReference>
<dbReference type="Gene3D" id="1.10.510.10">
    <property type="entry name" value="Transferase(Phosphotransferase) domain 1"/>
    <property type="match status" value="1"/>
</dbReference>
<dbReference type="Gene3D" id="2.130.10.10">
    <property type="entry name" value="YVTN repeat-like/Quinoprotein amine dehydrogenase"/>
    <property type="match status" value="1"/>
</dbReference>
<dbReference type="InterPro" id="IPR013783">
    <property type="entry name" value="Ig-like_fold"/>
</dbReference>
<dbReference type="InterPro" id="IPR014756">
    <property type="entry name" value="Ig_E-set"/>
</dbReference>
<dbReference type="InterPro" id="IPR002909">
    <property type="entry name" value="IPT_dom"/>
</dbReference>
<dbReference type="InterPro" id="IPR011009">
    <property type="entry name" value="Kinase-like_dom_sf"/>
</dbReference>
<dbReference type="InterPro" id="IPR031148">
    <property type="entry name" value="Plexin"/>
</dbReference>
<dbReference type="InterPro" id="IPR002165">
    <property type="entry name" value="Plexin_repeat"/>
</dbReference>
<dbReference type="InterPro" id="IPR000719">
    <property type="entry name" value="Prot_kinase_dom"/>
</dbReference>
<dbReference type="InterPro" id="IPR017441">
    <property type="entry name" value="Protein_kinase_ATP_BS"/>
</dbReference>
<dbReference type="InterPro" id="IPR016201">
    <property type="entry name" value="PSI"/>
</dbReference>
<dbReference type="InterPro" id="IPR001627">
    <property type="entry name" value="Semap_dom"/>
</dbReference>
<dbReference type="InterPro" id="IPR036352">
    <property type="entry name" value="Semap_dom_sf"/>
</dbReference>
<dbReference type="InterPro" id="IPR001245">
    <property type="entry name" value="Ser-Thr/Tyr_kinase_cat_dom"/>
</dbReference>
<dbReference type="InterPro" id="IPR008266">
    <property type="entry name" value="Tyr_kinase_AS"/>
</dbReference>
<dbReference type="InterPro" id="IPR020635">
    <property type="entry name" value="Tyr_kinase_cat_dom"/>
</dbReference>
<dbReference type="InterPro" id="IPR016244">
    <property type="entry name" value="Tyr_kinase_HGF/MSP_rcpt"/>
</dbReference>
<dbReference type="InterPro" id="IPR015943">
    <property type="entry name" value="WD40/YVTN_repeat-like_dom_sf"/>
</dbReference>
<dbReference type="PANTHER" id="PTHR22625:SF61">
    <property type="entry name" value="HEPATOCYTE GROWTH FACTOR RECEPTOR"/>
    <property type="match status" value="1"/>
</dbReference>
<dbReference type="PANTHER" id="PTHR22625">
    <property type="entry name" value="PLEXIN"/>
    <property type="match status" value="1"/>
</dbReference>
<dbReference type="Pfam" id="PF07714">
    <property type="entry name" value="PK_Tyr_Ser-Thr"/>
    <property type="match status" value="1"/>
</dbReference>
<dbReference type="Pfam" id="PF01437">
    <property type="entry name" value="PSI"/>
    <property type="match status" value="1"/>
</dbReference>
<dbReference type="Pfam" id="PF01403">
    <property type="entry name" value="Sema"/>
    <property type="match status" value="1"/>
</dbReference>
<dbReference type="Pfam" id="PF01833">
    <property type="entry name" value="TIG"/>
    <property type="match status" value="3"/>
</dbReference>
<dbReference type="PIRSF" id="PIRSF000617">
    <property type="entry name" value="TyrPK_HGF-R"/>
    <property type="match status" value="1"/>
</dbReference>
<dbReference type="PRINTS" id="PR00109">
    <property type="entry name" value="TYRKINASE"/>
</dbReference>
<dbReference type="SMART" id="SM00429">
    <property type="entry name" value="IPT"/>
    <property type="match status" value="4"/>
</dbReference>
<dbReference type="SMART" id="SM00423">
    <property type="entry name" value="PSI"/>
    <property type="match status" value="1"/>
</dbReference>
<dbReference type="SMART" id="SM00630">
    <property type="entry name" value="Sema"/>
    <property type="match status" value="1"/>
</dbReference>
<dbReference type="SMART" id="SM00219">
    <property type="entry name" value="TyrKc"/>
    <property type="match status" value="1"/>
</dbReference>
<dbReference type="SUPFAM" id="SSF81296">
    <property type="entry name" value="E set domains"/>
    <property type="match status" value="3"/>
</dbReference>
<dbReference type="SUPFAM" id="SSF103575">
    <property type="entry name" value="Plexin repeat"/>
    <property type="match status" value="1"/>
</dbReference>
<dbReference type="SUPFAM" id="SSF56112">
    <property type="entry name" value="Protein kinase-like (PK-like)"/>
    <property type="match status" value="1"/>
</dbReference>
<dbReference type="SUPFAM" id="SSF101912">
    <property type="entry name" value="Sema domain"/>
    <property type="match status" value="1"/>
</dbReference>
<dbReference type="PROSITE" id="PS00107">
    <property type="entry name" value="PROTEIN_KINASE_ATP"/>
    <property type="match status" value="1"/>
</dbReference>
<dbReference type="PROSITE" id="PS50011">
    <property type="entry name" value="PROTEIN_KINASE_DOM"/>
    <property type="match status" value="1"/>
</dbReference>
<dbReference type="PROSITE" id="PS00109">
    <property type="entry name" value="PROTEIN_KINASE_TYR"/>
    <property type="match status" value="1"/>
</dbReference>
<dbReference type="PROSITE" id="PS51004">
    <property type="entry name" value="SEMA"/>
    <property type="match status" value="1"/>
</dbReference>
<accession>Q07DV8</accession>